<proteinExistence type="evidence at protein level"/>
<accession>Q6UWW9</accession>
<dbReference type="EMBL" id="AY358607">
    <property type="protein sequence ID" value="AAQ88970.1"/>
    <property type="molecule type" value="mRNA"/>
</dbReference>
<dbReference type="EMBL" id="CH471052">
    <property type="protein sequence ID" value="EAW78105.1"/>
    <property type="molecule type" value="Genomic_DNA"/>
</dbReference>
<dbReference type="EMBL" id="BC071780">
    <property type="protein sequence ID" value="AAH71780.1"/>
    <property type="molecule type" value="mRNA"/>
</dbReference>
<dbReference type="CCDS" id="CCDS3297.1"/>
<dbReference type="RefSeq" id="NP_997199.1">
    <property type="nucleotide sequence ID" value="NM_207316.3"/>
</dbReference>
<dbReference type="BioGRID" id="126299">
    <property type="interactions" value="11"/>
</dbReference>
<dbReference type="FunCoup" id="Q6UWW9">
    <property type="interactions" value="3"/>
</dbReference>
<dbReference type="IntAct" id="Q6UWW9">
    <property type="interactions" value="10"/>
</dbReference>
<dbReference type="STRING" id="9606.ENSP00000346981"/>
<dbReference type="GlyGen" id="Q6UWW9">
    <property type="glycosylation" value="1 site"/>
</dbReference>
<dbReference type="iPTMnet" id="Q6UWW9"/>
<dbReference type="PhosphoSitePlus" id="Q6UWW9"/>
<dbReference type="BioMuta" id="TMEM207"/>
<dbReference type="DMDM" id="74738156"/>
<dbReference type="jPOST" id="Q6UWW9"/>
<dbReference type="PaxDb" id="9606-ENSP00000346981"/>
<dbReference type="PeptideAtlas" id="Q6UWW9"/>
<dbReference type="Antibodypedia" id="3068">
    <property type="antibodies" value="35 antibodies from 10 providers"/>
</dbReference>
<dbReference type="DNASU" id="131920"/>
<dbReference type="Ensembl" id="ENST00000354905.3">
    <property type="protein sequence ID" value="ENSP00000346981.2"/>
    <property type="gene ID" value="ENSG00000198398.3"/>
</dbReference>
<dbReference type="GeneID" id="131920"/>
<dbReference type="KEGG" id="hsa:131920"/>
<dbReference type="MANE-Select" id="ENST00000354905.3">
    <property type="protein sequence ID" value="ENSP00000346981.2"/>
    <property type="RefSeq nucleotide sequence ID" value="NM_207316.3"/>
    <property type="RefSeq protein sequence ID" value="NP_997199.1"/>
</dbReference>
<dbReference type="UCSC" id="uc003fsj.4">
    <property type="organism name" value="human"/>
</dbReference>
<dbReference type="AGR" id="HGNC:33705"/>
<dbReference type="CTD" id="131920"/>
<dbReference type="DisGeNET" id="131920"/>
<dbReference type="GeneCards" id="TMEM207"/>
<dbReference type="HGNC" id="HGNC:33705">
    <property type="gene designation" value="TMEM207"/>
</dbReference>
<dbReference type="HPA" id="ENSG00000198398">
    <property type="expression patterns" value="Tissue enriched (kidney)"/>
</dbReference>
<dbReference type="MIM" id="614786">
    <property type="type" value="gene"/>
</dbReference>
<dbReference type="neXtProt" id="NX_Q6UWW9"/>
<dbReference type="OpenTargets" id="ENSG00000198398"/>
<dbReference type="PharmGKB" id="PA162406407"/>
<dbReference type="VEuPathDB" id="HostDB:ENSG00000198398"/>
<dbReference type="eggNOG" id="ENOG502STQD">
    <property type="taxonomic scope" value="Eukaryota"/>
</dbReference>
<dbReference type="GeneTree" id="ENSGT00390000006126"/>
<dbReference type="HOGENOM" id="CLU_149421_0_0_1"/>
<dbReference type="InParanoid" id="Q6UWW9"/>
<dbReference type="OMA" id="PNGWYIW"/>
<dbReference type="OrthoDB" id="9907850at2759"/>
<dbReference type="PAN-GO" id="Q6UWW9">
    <property type="GO annotations" value="0 GO annotations based on evolutionary models"/>
</dbReference>
<dbReference type="PhylomeDB" id="Q6UWW9"/>
<dbReference type="TreeFam" id="TF342774"/>
<dbReference type="PathwayCommons" id="Q6UWW9"/>
<dbReference type="SignaLink" id="Q6UWW9"/>
<dbReference type="BioGRID-ORCS" id="131920">
    <property type="hits" value="5 hits in 1132 CRISPR screens"/>
</dbReference>
<dbReference type="GenomeRNAi" id="131920"/>
<dbReference type="Pharos" id="Q6UWW9">
    <property type="development level" value="Tdark"/>
</dbReference>
<dbReference type="PRO" id="PR:Q6UWW9"/>
<dbReference type="Proteomes" id="UP000005640">
    <property type="component" value="Chromosome 3"/>
</dbReference>
<dbReference type="RNAct" id="Q6UWW9">
    <property type="molecule type" value="protein"/>
</dbReference>
<dbReference type="Bgee" id="ENSG00000198398">
    <property type="expression patterns" value="Expressed in kidney epithelium and 8 other cell types or tissues"/>
</dbReference>
<dbReference type="GO" id="GO:0016020">
    <property type="term" value="C:membrane"/>
    <property type="evidence" value="ECO:0007669"/>
    <property type="project" value="UniProtKB-SubCell"/>
</dbReference>
<dbReference type="InterPro" id="IPR039490">
    <property type="entry name" value="TMEM207"/>
</dbReference>
<dbReference type="PANTHER" id="PTHR36467">
    <property type="entry name" value="TRANSMEMBRANE PROTEIN 207"/>
    <property type="match status" value="1"/>
</dbReference>
<dbReference type="PANTHER" id="PTHR36467:SF1">
    <property type="entry name" value="TRANSMEMBRANE PROTEIN 207"/>
    <property type="match status" value="1"/>
</dbReference>
<comment type="subunit">
    <text evidence="2">Interacts with WWOX.</text>
</comment>
<comment type="interaction">
    <interactant intactId="EBI-13301303">
        <id>Q6UWW9</id>
    </interactant>
    <interactant intactId="EBI-16163679">
        <id>Q8WWA0</id>
        <label>ITLN1</label>
    </interactant>
    <organismsDiffer>false</organismsDiffer>
    <experiments>2</experiments>
</comment>
<comment type="interaction">
    <interactant intactId="EBI-13301303">
        <id>Q6UWW9</id>
    </interactant>
    <interactant intactId="EBI-10266796">
        <id>Q8N5M9</id>
        <label>JAGN1</label>
    </interactant>
    <organismsDiffer>false</organismsDiffer>
    <experiments>3</experiments>
</comment>
<comment type="interaction">
    <interactant intactId="EBI-13301303">
        <id>Q6UWW9</id>
    </interactant>
    <interactant intactId="EBI-3932027">
        <id>P21145</id>
        <label>MAL</label>
    </interactant>
    <organismsDiffer>false</organismsDiffer>
    <experiments>3</experiments>
</comment>
<comment type="interaction">
    <interactant intactId="EBI-13301303">
        <id>Q6UWW9</id>
    </interactant>
    <interactant intactId="EBI-11324706">
        <id>Q99735</id>
        <label>MGST2</label>
    </interactant>
    <organismsDiffer>false</organismsDiffer>
    <experiments>3</experiments>
</comment>
<comment type="interaction">
    <interactant intactId="EBI-13301303">
        <id>Q6UWW9</id>
    </interactant>
    <interactant intactId="EBI-12051377">
        <id>Q8N912</id>
        <label>NRAC</label>
    </interactant>
    <organismsDiffer>false</organismsDiffer>
    <experiments>3</experiments>
</comment>
<comment type="interaction">
    <interactant intactId="EBI-13301303">
        <id>Q6UWW9</id>
    </interactant>
    <interactant intactId="EBI-6380741">
        <id>P42857</id>
        <label>NSG1</label>
    </interactant>
    <organismsDiffer>false</organismsDiffer>
    <experiments>3</experiments>
</comment>
<comment type="interaction">
    <interactant intactId="EBI-13301303">
        <id>Q6UWW9</id>
    </interactant>
    <interactant intactId="EBI-745846">
        <id>P57086</id>
        <label>SCAND1</label>
    </interactant>
    <organismsDiffer>false</organismsDiffer>
    <experiments>3</experiments>
</comment>
<comment type="interaction">
    <interactant intactId="EBI-13301303">
        <id>Q6UWW9</id>
    </interactant>
    <interactant intactId="EBI-2844246">
        <id>Q9NV12</id>
        <label>TMEM140</label>
    </interactant>
    <organismsDiffer>false</organismsDiffer>
    <experiments>3</experiments>
</comment>
<comment type="interaction">
    <interactant intactId="EBI-13301303">
        <id>Q6UWW9</id>
    </interactant>
    <interactant intactId="EBI-10173151">
        <id>A2RU14</id>
        <label>TMEM218</label>
    </interactant>
    <organismsDiffer>false</organismsDiffer>
    <experiments>3</experiments>
</comment>
<comment type="interaction">
    <interactant intactId="EBI-13301303">
        <id>Q6UWW9</id>
    </interactant>
    <interactant intactId="EBI-16746122">
        <id>Q9NSU2-1</id>
        <label>TREX1</label>
    </interactant>
    <organismsDiffer>false</organismsDiffer>
    <experiments>3</experiments>
</comment>
<comment type="subcellular location">
    <subcellularLocation>
        <location evidence="3">Membrane</location>
        <topology evidence="3">Single-pass type I membrane protein</topology>
    </subcellularLocation>
</comment>
<comment type="tissue specificity">
    <text evidence="2">Expressed in some signet-ring cell carcinoma, especially those showing high invasion and metastatic activity (at protein level).</text>
</comment>
<sequence>MSRSRLFSVTSAISTIGILCLPLFQLVLSDLPCEEDEMCVNYNDQHPNGWYIWILLLLVLVAALLCGAVVLCLQCWLRRPRIDSHRRTMAVFAVGDLDSIYGTEAAVSPTVGIHLQTQTPDLYPVPAPCFGPLGSPPPYEEIVKTT</sequence>
<gene>
    <name type="primary">TMEM207</name>
    <name type="ORF">UNQ846/PRO1784</name>
</gene>
<reference key="1">
    <citation type="journal article" date="2003" name="Genome Res.">
        <title>The secreted protein discovery initiative (SPDI), a large-scale effort to identify novel human secreted and transmembrane proteins: a bioinformatics assessment.</title>
        <authorList>
            <person name="Clark H.F."/>
            <person name="Gurney A.L."/>
            <person name="Abaya E."/>
            <person name="Baker K."/>
            <person name="Baldwin D.T."/>
            <person name="Brush J."/>
            <person name="Chen J."/>
            <person name="Chow B."/>
            <person name="Chui C."/>
            <person name="Crowley C."/>
            <person name="Currell B."/>
            <person name="Deuel B."/>
            <person name="Dowd P."/>
            <person name="Eaton D."/>
            <person name="Foster J.S."/>
            <person name="Grimaldi C."/>
            <person name="Gu Q."/>
            <person name="Hass P.E."/>
            <person name="Heldens S."/>
            <person name="Huang A."/>
            <person name="Kim H.S."/>
            <person name="Klimowski L."/>
            <person name="Jin Y."/>
            <person name="Johnson S."/>
            <person name="Lee J."/>
            <person name="Lewis L."/>
            <person name="Liao D."/>
            <person name="Mark M.R."/>
            <person name="Robbie E."/>
            <person name="Sanchez C."/>
            <person name="Schoenfeld J."/>
            <person name="Seshagiri S."/>
            <person name="Simmons L."/>
            <person name="Singh J."/>
            <person name="Smith V."/>
            <person name="Stinson J."/>
            <person name="Vagts A."/>
            <person name="Vandlen R.L."/>
            <person name="Watanabe C."/>
            <person name="Wieand D."/>
            <person name="Woods K."/>
            <person name="Xie M.-H."/>
            <person name="Yansura D.G."/>
            <person name="Yi S."/>
            <person name="Yu G."/>
            <person name="Yuan J."/>
            <person name="Zhang M."/>
            <person name="Zhang Z."/>
            <person name="Goddard A.D."/>
            <person name="Wood W.I."/>
            <person name="Godowski P.J."/>
            <person name="Gray A.M."/>
        </authorList>
    </citation>
    <scope>NUCLEOTIDE SEQUENCE [LARGE SCALE MRNA]</scope>
</reference>
<reference key="2">
    <citation type="submission" date="2005-09" db="EMBL/GenBank/DDBJ databases">
        <authorList>
            <person name="Mural R.J."/>
            <person name="Istrail S."/>
            <person name="Sutton G.G."/>
            <person name="Florea L."/>
            <person name="Halpern A.L."/>
            <person name="Mobarry C.M."/>
            <person name="Lippert R."/>
            <person name="Walenz B."/>
            <person name="Shatkay H."/>
            <person name="Dew I."/>
            <person name="Miller J.R."/>
            <person name="Flanigan M.J."/>
            <person name="Edwards N.J."/>
            <person name="Bolanos R."/>
            <person name="Fasulo D."/>
            <person name="Halldorsson B.V."/>
            <person name="Hannenhalli S."/>
            <person name="Turner R."/>
            <person name="Yooseph S."/>
            <person name="Lu F."/>
            <person name="Nusskern D.R."/>
            <person name="Shue B.C."/>
            <person name="Zheng X.H."/>
            <person name="Zhong F."/>
            <person name="Delcher A.L."/>
            <person name="Huson D.H."/>
            <person name="Kravitz S.A."/>
            <person name="Mouchard L."/>
            <person name="Reinert K."/>
            <person name="Remington K.A."/>
            <person name="Clark A.G."/>
            <person name="Waterman M.S."/>
            <person name="Eichler E.E."/>
            <person name="Adams M.D."/>
            <person name="Hunkapiller M.W."/>
            <person name="Myers E.W."/>
            <person name="Venter J.C."/>
        </authorList>
    </citation>
    <scope>NUCLEOTIDE SEQUENCE [LARGE SCALE GENOMIC DNA]</scope>
</reference>
<reference key="3">
    <citation type="journal article" date="2004" name="Genome Res.">
        <title>The status, quality, and expansion of the NIH full-length cDNA project: the Mammalian Gene Collection (MGC).</title>
        <authorList>
            <consortium name="The MGC Project Team"/>
        </authorList>
    </citation>
    <scope>NUCLEOTIDE SEQUENCE [LARGE SCALE MRNA]</scope>
    <source>
        <tissue>Kidney</tissue>
    </source>
</reference>
<reference key="4">
    <citation type="journal article" date="2012" name="Carcinogenesis">
        <title>A WWOX-binding molecule, transmembrane protein 207, is related to the invasiveness of gastric signet-ring cell carcinoma.</title>
        <authorList>
            <person name="Takeuchi T."/>
            <person name="Adachi Y."/>
            <person name="Nagayama T."/>
        </authorList>
    </citation>
    <scope>INTERACTION WITH WWOX</scope>
    <scope>TISSUE SPECIFICITY</scope>
    <scope>MUTAGENESIS OF 136-PRO-PRO-137</scope>
</reference>
<organism>
    <name type="scientific">Homo sapiens</name>
    <name type="common">Human</name>
    <dbReference type="NCBI Taxonomy" id="9606"/>
    <lineage>
        <taxon>Eukaryota</taxon>
        <taxon>Metazoa</taxon>
        <taxon>Chordata</taxon>
        <taxon>Craniata</taxon>
        <taxon>Vertebrata</taxon>
        <taxon>Euteleostomi</taxon>
        <taxon>Mammalia</taxon>
        <taxon>Eutheria</taxon>
        <taxon>Euarchontoglires</taxon>
        <taxon>Primates</taxon>
        <taxon>Haplorrhini</taxon>
        <taxon>Catarrhini</taxon>
        <taxon>Hominidae</taxon>
        <taxon>Homo</taxon>
    </lineage>
</organism>
<protein>
    <recommendedName>
        <fullName>Transmembrane protein 207</fullName>
    </recommendedName>
</protein>
<keyword id="KW-0472">Membrane</keyword>
<keyword id="KW-1185">Reference proteome</keyword>
<keyword id="KW-0732">Signal</keyword>
<keyword id="KW-0812">Transmembrane</keyword>
<keyword id="KW-1133">Transmembrane helix</keyword>
<name>TM207_HUMAN</name>
<feature type="signal peptide" evidence="1">
    <location>
        <begin position="1"/>
        <end position="29"/>
    </location>
</feature>
<feature type="chain" id="PRO_0000317525" description="Transmembrane protein 207">
    <location>
        <begin position="30"/>
        <end position="146"/>
    </location>
</feature>
<feature type="transmembrane region" description="Helical" evidence="1">
    <location>
        <begin position="52"/>
        <end position="72"/>
    </location>
</feature>
<feature type="sequence variant" id="VAR_051436" description="In dbSNP:rs35161724.">
    <original>L</original>
    <variation>V</variation>
    <location>
        <position position="57"/>
    </location>
</feature>
<feature type="mutagenesis site" description="Loss of WWOX-binding." evidence="2">
    <original>PP</original>
    <variation>RS</variation>
    <location>
        <begin position="136"/>
        <end position="137"/>
    </location>
</feature>
<evidence type="ECO:0000255" key="1"/>
<evidence type="ECO:0000269" key="2">
    <source>
    </source>
</evidence>
<evidence type="ECO:0000305" key="3"/>